<keyword id="KW-0133">Cell shape</keyword>
<keyword id="KW-0961">Cell wall biogenesis/degradation</keyword>
<keyword id="KW-0413">Isomerase</keyword>
<keyword id="KW-0573">Peptidoglycan synthesis</keyword>
<proteinExistence type="inferred from homology"/>
<comment type="function">
    <text evidence="1">Provides the (R)-glutamate required for cell wall biosynthesis.</text>
</comment>
<comment type="catalytic activity">
    <reaction evidence="1">
        <text>L-glutamate = D-glutamate</text>
        <dbReference type="Rhea" id="RHEA:12813"/>
        <dbReference type="ChEBI" id="CHEBI:29985"/>
        <dbReference type="ChEBI" id="CHEBI:29986"/>
        <dbReference type="EC" id="5.1.1.3"/>
    </reaction>
</comment>
<comment type="pathway">
    <text evidence="1">Cell wall biogenesis; peptidoglycan biosynthesis.</text>
</comment>
<comment type="similarity">
    <text evidence="1">Belongs to the aspartate/glutamate racemases family.</text>
</comment>
<evidence type="ECO:0000255" key="1">
    <source>
        <dbReference type="HAMAP-Rule" id="MF_00258"/>
    </source>
</evidence>
<name>MURI_STRP4</name>
<dbReference type="EC" id="5.1.1.3" evidence="1"/>
<dbReference type="EMBL" id="CP001015">
    <property type="protein sequence ID" value="ACF56058.1"/>
    <property type="molecule type" value="Genomic_DNA"/>
</dbReference>
<dbReference type="SMR" id="B5E1Z3"/>
<dbReference type="KEGG" id="spx:SPG_1766"/>
<dbReference type="HOGENOM" id="CLU_052344_0_2_9"/>
<dbReference type="UniPathway" id="UPA00219"/>
<dbReference type="GO" id="GO:0008881">
    <property type="term" value="F:glutamate racemase activity"/>
    <property type="evidence" value="ECO:0007669"/>
    <property type="project" value="UniProtKB-UniRule"/>
</dbReference>
<dbReference type="GO" id="GO:0071555">
    <property type="term" value="P:cell wall organization"/>
    <property type="evidence" value="ECO:0007669"/>
    <property type="project" value="UniProtKB-KW"/>
</dbReference>
<dbReference type="GO" id="GO:0009252">
    <property type="term" value="P:peptidoglycan biosynthetic process"/>
    <property type="evidence" value="ECO:0007669"/>
    <property type="project" value="UniProtKB-UniRule"/>
</dbReference>
<dbReference type="GO" id="GO:0008360">
    <property type="term" value="P:regulation of cell shape"/>
    <property type="evidence" value="ECO:0007669"/>
    <property type="project" value="UniProtKB-KW"/>
</dbReference>
<dbReference type="FunFam" id="3.40.50.1860:FF:000002">
    <property type="entry name" value="Glutamate racemase"/>
    <property type="match status" value="1"/>
</dbReference>
<dbReference type="Gene3D" id="3.40.50.1860">
    <property type="match status" value="2"/>
</dbReference>
<dbReference type="HAMAP" id="MF_00258">
    <property type="entry name" value="Glu_racemase"/>
    <property type="match status" value="1"/>
</dbReference>
<dbReference type="InterPro" id="IPR015942">
    <property type="entry name" value="Asp/Glu/hydantoin_racemase"/>
</dbReference>
<dbReference type="InterPro" id="IPR001920">
    <property type="entry name" value="Asp/Glu_race"/>
</dbReference>
<dbReference type="InterPro" id="IPR018187">
    <property type="entry name" value="Asp/Glu_racemase_AS_1"/>
</dbReference>
<dbReference type="InterPro" id="IPR033134">
    <property type="entry name" value="Asp/Glu_racemase_AS_2"/>
</dbReference>
<dbReference type="InterPro" id="IPR004391">
    <property type="entry name" value="Glu_race"/>
</dbReference>
<dbReference type="NCBIfam" id="TIGR00067">
    <property type="entry name" value="glut_race"/>
    <property type="match status" value="1"/>
</dbReference>
<dbReference type="NCBIfam" id="NF002035">
    <property type="entry name" value="PRK00865.1-3"/>
    <property type="match status" value="1"/>
</dbReference>
<dbReference type="PANTHER" id="PTHR21198">
    <property type="entry name" value="GLUTAMATE RACEMASE"/>
    <property type="match status" value="1"/>
</dbReference>
<dbReference type="PANTHER" id="PTHR21198:SF2">
    <property type="entry name" value="GLUTAMATE RACEMASE"/>
    <property type="match status" value="1"/>
</dbReference>
<dbReference type="Pfam" id="PF01177">
    <property type="entry name" value="Asp_Glu_race"/>
    <property type="match status" value="1"/>
</dbReference>
<dbReference type="SUPFAM" id="SSF53681">
    <property type="entry name" value="Aspartate/glutamate racemase"/>
    <property type="match status" value="2"/>
</dbReference>
<dbReference type="PROSITE" id="PS00923">
    <property type="entry name" value="ASP_GLU_RACEMASE_1"/>
    <property type="match status" value="1"/>
</dbReference>
<dbReference type="PROSITE" id="PS00924">
    <property type="entry name" value="ASP_GLU_RACEMASE_2"/>
    <property type="match status" value="1"/>
</dbReference>
<protein>
    <recommendedName>
        <fullName evidence="1">Glutamate racemase</fullName>
        <ecNumber evidence="1">5.1.1.3</ecNumber>
    </recommendedName>
</protein>
<feature type="chain" id="PRO_1000114065" description="Glutamate racemase">
    <location>
        <begin position="1"/>
        <end position="264"/>
    </location>
</feature>
<feature type="active site" description="Proton donor/acceptor" evidence="1">
    <location>
        <position position="73"/>
    </location>
</feature>
<feature type="active site" description="Proton donor/acceptor" evidence="1">
    <location>
        <position position="183"/>
    </location>
</feature>
<feature type="binding site" evidence="1">
    <location>
        <begin position="10"/>
        <end position="11"/>
    </location>
    <ligand>
        <name>substrate</name>
    </ligand>
</feature>
<feature type="binding site" evidence="1">
    <location>
        <begin position="42"/>
        <end position="43"/>
    </location>
    <ligand>
        <name>substrate</name>
    </ligand>
</feature>
<feature type="binding site" evidence="1">
    <location>
        <begin position="74"/>
        <end position="75"/>
    </location>
    <ligand>
        <name>substrate</name>
    </ligand>
</feature>
<feature type="binding site" evidence="1">
    <location>
        <begin position="184"/>
        <end position="185"/>
    </location>
    <ligand>
        <name>substrate</name>
    </ligand>
</feature>
<sequence>MDNRPIGFLDSGVGGLTVVRELMRQLPHEEIVYIGDSARAPYGPRPAEQIREYTWQLVNFLLTKDVKMIVIACNTATAVVWEEIKAQLDIPVLGVILPGASAAIKSSQGGKIGVIGTPMTVQSDIYRKKIHDLDPDLQVESLACPKFAPLVESGALSTSVTKKVVYETLRPLVGKVDSLILGCTHYPLLRPIIQNVMGPKVQLIDSGAECVRDISVLLNYFEINRGRDAGPLHHRFYTTASSQSFAQIGEEWLEKEIHVEHVEL</sequence>
<gene>
    <name evidence="1" type="primary">murI</name>
    <name type="ordered locus">SPG_1766</name>
</gene>
<reference key="1">
    <citation type="journal article" date="2001" name="Microb. Drug Resist.">
        <title>Annotated draft genomic sequence from a Streptococcus pneumoniae type 19F clinical isolate.</title>
        <authorList>
            <person name="Dopazo J."/>
            <person name="Mendoza A."/>
            <person name="Herrero J."/>
            <person name="Caldara F."/>
            <person name="Humbert Y."/>
            <person name="Friedli L."/>
            <person name="Guerrier M."/>
            <person name="Grand-Schenk E."/>
            <person name="Gandin C."/>
            <person name="de Francesco M."/>
            <person name="Polissi A."/>
            <person name="Buell G."/>
            <person name="Feger G."/>
            <person name="Garcia E."/>
            <person name="Peitsch M."/>
            <person name="Garcia-Bustos J.F."/>
        </authorList>
    </citation>
    <scope>NUCLEOTIDE SEQUENCE [LARGE SCALE GENOMIC DNA]</scope>
    <source>
        <strain>G54</strain>
    </source>
</reference>
<reference key="2">
    <citation type="submission" date="2008-03" db="EMBL/GenBank/DDBJ databases">
        <title>Pneumococcal beta glucoside metabolism investigated by whole genome comparison.</title>
        <authorList>
            <person name="Mulas L."/>
            <person name="Trappetti C."/>
            <person name="Hakenbeck R."/>
            <person name="Iannelli F."/>
            <person name="Pozzi G."/>
            <person name="Davidsen T.M."/>
            <person name="Tettelin H."/>
            <person name="Oggioni M."/>
        </authorList>
    </citation>
    <scope>NUCLEOTIDE SEQUENCE [LARGE SCALE GENOMIC DNA]</scope>
    <source>
        <strain>G54</strain>
    </source>
</reference>
<organism>
    <name type="scientific">Streptococcus pneumoniae serotype 19F (strain G54)</name>
    <dbReference type="NCBI Taxonomy" id="512566"/>
    <lineage>
        <taxon>Bacteria</taxon>
        <taxon>Bacillati</taxon>
        <taxon>Bacillota</taxon>
        <taxon>Bacilli</taxon>
        <taxon>Lactobacillales</taxon>
        <taxon>Streptococcaceae</taxon>
        <taxon>Streptococcus</taxon>
    </lineage>
</organism>
<accession>B5E1Z3</accession>